<name>MATK_ARIGL</name>
<protein>
    <recommendedName>
        <fullName evidence="1">Maturase K</fullName>
    </recommendedName>
    <alternativeName>
        <fullName evidence="1">Intron maturase</fullName>
    </alternativeName>
</protein>
<geneLocation type="chloroplast"/>
<sequence>MEELQGYFEKDRSRQQPFLYPLLFQEYIYALAHGRGLNGNSSIFYEPRKVFGYDSKSSLALVKRLITRIYQQNSFLSPVNDSNQNRFVGHHHNNLFYSSFYSQMISEGFAIIVEIPFSLQLVSHFKEKEIPKFHNLRSIHSIFPFLEDKFLHFNYVSDILIPHPIHMEILVQILQCWIQDVPLLHFLGFFLHEYHNWNSFLITKNKSSYSFSKENKRLFRLVYNSYVSECEFVFVFLRKHSSYLRFISFRTFLERRYFYGKMEHRQTEHLIVVYCDYFNGTLWFFKDPFMHYVRCQGKAILSSKGTHLLMKKWKYHFVNFWQYNFHFWYQSYRIHINQLSNCSFYFLGYLSSLLKKSSTVRNQMLENSFLIDTIITKFDTAVPVIFLIGALSKAPFCTVSGHPISKPIWTDLSDSYIIERFGRICRNLSHYHSGSSKKHGLYRIKYILRLSCARTLARKHKSTVRTFMQKLGSGLVEEFFIEGEQGLSLILPKAIPFIFQGSHRERIWYLDIIRINDLVNHS</sequence>
<feature type="chain" id="PRO_0000143255" description="Maturase K">
    <location>
        <begin position="1"/>
        <end position="522"/>
    </location>
</feature>
<organism>
    <name type="scientific">Aristea glauca</name>
    <dbReference type="NCBI Taxonomy" id="61253"/>
    <lineage>
        <taxon>Eukaryota</taxon>
        <taxon>Viridiplantae</taxon>
        <taxon>Streptophyta</taxon>
        <taxon>Embryophyta</taxon>
        <taxon>Tracheophyta</taxon>
        <taxon>Spermatophyta</taxon>
        <taxon>Magnoliopsida</taxon>
        <taxon>Liliopsida</taxon>
        <taxon>Asparagales</taxon>
        <taxon>Iridaceae</taxon>
        <taxon>Aristeoideae</taxon>
        <taxon>Aristea</taxon>
    </lineage>
</organism>
<reference key="1">
    <citation type="submission" date="2005-07" db="EMBL/GenBank/DDBJ databases">
        <title>Environmental energy and species richness in flowering plants.</title>
        <authorList>
            <person name="Davies T.J."/>
        </authorList>
    </citation>
    <scope>NUCLEOTIDE SEQUENCE [GENOMIC DNA]</scope>
</reference>
<accession>Q4H1B9</accession>
<gene>
    <name evidence="1" type="primary">matK</name>
</gene>
<keyword id="KW-0150">Chloroplast</keyword>
<keyword id="KW-0507">mRNA processing</keyword>
<keyword id="KW-0934">Plastid</keyword>
<keyword id="KW-0694">RNA-binding</keyword>
<keyword id="KW-0819">tRNA processing</keyword>
<proteinExistence type="inferred from homology"/>
<evidence type="ECO:0000255" key="1">
    <source>
        <dbReference type="HAMAP-Rule" id="MF_01390"/>
    </source>
</evidence>
<dbReference type="EMBL" id="AJ579933">
    <property type="protein sequence ID" value="CAE45216.1"/>
    <property type="molecule type" value="Genomic_DNA"/>
</dbReference>
<dbReference type="GO" id="GO:0009507">
    <property type="term" value="C:chloroplast"/>
    <property type="evidence" value="ECO:0007669"/>
    <property type="project" value="UniProtKB-SubCell"/>
</dbReference>
<dbReference type="GO" id="GO:0003723">
    <property type="term" value="F:RNA binding"/>
    <property type="evidence" value="ECO:0007669"/>
    <property type="project" value="UniProtKB-KW"/>
</dbReference>
<dbReference type="GO" id="GO:0006397">
    <property type="term" value="P:mRNA processing"/>
    <property type="evidence" value="ECO:0007669"/>
    <property type="project" value="UniProtKB-KW"/>
</dbReference>
<dbReference type="GO" id="GO:0008380">
    <property type="term" value="P:RNA splicing"/>
    <property type="evidence" value="ECO:0007669"/>
    <property type="project" value="UniProtKB-UniRule"/>
</dbReference>
<dbReference type="GO" id="GO:0008033">
    <property type="term" value="P:tRNA processing"/>
    <property type="evidence" value="ECO:0007669"/>
    <property type="project" value="UniProtKB-KW"/>
</dbReference>
<dbReference type="HAMAP" id="MF_01390">
    <property type="entry name" value="MatK"/>
    <property type="match status" value="1"/>
</dbReference>
<dbReference type="InterPro" id="IPR024937">
    <property type="entry name" value="Domain_X"/>
</dbReference>
<dbReference type="InterPro" id="IPR002866">
    <property type="entry name" value="Maturase_MatK"/>
</dbReference>
<dbReference type="InterPro" id="IPR024942">
    <property type="entry name" value="Maturase_MatK_N"/>
</dbReference>
<dbReference type="PANTHER" id="PTHR34811">
    <property type="entry name" value="MATURASE K"/>
    <property type="match status" value="1"/>
</dbReference>
<dbReference type="PANTHER" id="PTHR34811:SF1">
    <property type="entry name" value="MATURASE K"/>
    <property type="match status" value="1"/>
</dbReference>
<dbReference type="Pfam" id="PF01348">
    <property type="entry name" value="Intron_maturas2"/>
    <property type="match status" value="1"/>
</dbReference>
<dbReference type="Pfam" id="PF01824">
    <property type="entry name" value="MatK_N"/>
    <property type="match status" value="1"/>
</dbReference>
<comment type="function">
    <text evidence="1">Usually encoded in the trnK tRNA gene intron. Probably assists in splicing its own and other chloroplast group II introns.</text>
</comment>
<comment type="subcellular location">
    <subcellularLocation>
        <location>Plastid</location>
        <location>Chloroplast</location>
    </subcellularLocation>
</comment>
<comment type="similarity">
    <text evidence="1">Belongs to the intron maturase 2 family. MatK subfamily.</text>
</comment>